<proteinExistence type="evidence at transcript level"/>
<comment type="function">
    <text evidence="1">Orphan receptor involved in normal circadian rhythm behavior. Acts through the G-protein subclass G(z)-alpha and has an agonist-independent basal activity to repress cAMP production.</text>
</comment>
<comment type="subcellular location">
    <subcellularLocation>
        <location evidence="1">Cell membrane</location>
        <topology evidence="2">Multi-pass membrane protein</topology>
    </subcellularLocation>
</comment>
<comment type="tissue specificity">
    <text evidence="5">Expressed in brain, lung, heart, stomach, intestine, cultured aortic smooth muscle cells and cardiac myocytes.</text>
</comment>
<comment type="similarity">
    <text evidence="3">Belongs to the G-protein coupled receptor 1 family.</text>
</comment>
<comment type="sequence caution" evidence="6">
    <conflict type="frameshift">
        <sequence resource="EMBL-CDS" id="AAB31153"/>
    </conflict>
</comment>
<accession>Q64017</accession>
<accession>Q63231</accession>
<dbReference type="EMBL" id="S73608">
    <property type="protein sequence ID" value="AAB31153.1"/>
    <property type="status" value="ALT_FRAME"/>
    <property type="molecule type" value="mRNA"/>
</dbReference>
<dbReference type="EMBL" id="D38450">
    <property type="protein sequence ID" value="BAA07482.1"/>
    <property type="molecule type" value="mRNA"/>
</dbReference>
<dbReference type="RefSeq" id="NP_001257915.1">
    <property type="nucleotide sequence ID" value="NM_001270986.1"/>
</dbReference>
<dbReference type="SMR" id="Q64017"/>
<dbReference type="FunCoup" id="Q64017">
    <property type="interactions" value="623"/>
</dbReference>
<dbReference type="STRING" id="10116.ENSRNOP00000007882"/>
<dbReference type="GlyCosmos" id="Q64017">
    <property type="glycosylation" value="4 sites, No reported glycans"/>
</dbReference>
<dbReference type="GlyGen" id="Q64017">
    <property type="glycosylation" value="4 sites"/>
</dbReference>
<dbReference type="PhosphoSitePlus" id="Q64017"/>
<dbReference type="PaxDb" id="10116-ENSRNOP00000007882"/>
<dbReference type="Ensembl" id="ENSRNOT00000007882.5">
    <property type="protein sequence ID" value="ENSRNOP00000007882.3"/>
    <property type="gene ID" value="ENSRNOG00000005971.5"/>
</dbReference>
<dbReference type="GeneID" id="117257"/>
<dbReference type="KEGG" id="rno:117257"/>
<dbReference type="UCSC" id="RGD:621718">
    <property type="organism name" value="rat"/>
</dbReference>
<dbReference type="AGR" id="RGD:621718"/>
<dbReference type="CTD" id="11245"/>
<dbReference type="RGD" id="621718">
    <property type="gene designation" value="Gpr176"/>
</dbReference>
<dbReference type="eggNOG" id="KOG3656">
    <property type="taxonomic scope" value="Eukaryota"/>
</dbReference>
<dbReference type="GeneTree" id="ENSGT00950000182998"/>
<dbReference type="HOGENOM" id="CLU_045778_0_0_1"/>
<dbReference type="InParanoid" id="Q64017"/>
<dbReference type="OMA" id="VTDIYAM"/>
<dbReference type="OrthoDB" id="9339792at2759"/>
<dbReference type="PhylomeDB" id="Q64017"/>
<dbReference type="TreeFam" id="TF331506"/>
<dbReference type="PRO" id="PR:Q64017"/>
<dbReference type="Proteomes" id="UP000002494">
    <property type="component" value="Chromosome 3"/>
</dbReference>
<dbReference type="Bgee" id="ENSRNOG00000005971">
    <property type="expression patterns" value="Expressed in ovary and 18 other cell types or tissues"/>
</dbReference>
<dbReference type="GO" id="GO:0005886">
    <property type="term" value="C:plasma membrane"/>
    <property type="evidence" value="ECO:0000250"/>
    <property type="project" value="UniProtKB"/>
</dbReference>
<dbReference type="GO" id="GO:0004930">
    <property type="term" value="F:G protein-coupled receptor activity"/>
    <property type="evidence" value="ECO:0000250"/>
    <property type="project" value="UniProtKB"/>
</dbReference>
<dbReference type="GO" id="GO:0007193">
    <property type="term" value="P:adenylate cyclase-inhibiting G protein-coupled receptor signaling pathway"/>
    <property type="evidence" value="ECO:0000266"/>
    <property type="project" value="RGD"/>
</dbReference>
<dbReference type="GO" id="GO:0048512">
    <property type="term" value="P:circadian behavior"/>
    <property type="evidence" value="ECO:0000250"/>
    <property type="project" value="UniProtKB"/>
</dbReference>
<dbReference type="GO" id="GO:0007186">
    <property type="term" value="P:G protein-coupled receptor signaling pathway"/>
    <property type="evidence" value="ECO:0000250"/>
    <property type="project" value="UniProtKB"/>
</dbReference>
<dbReference type="CDD" id="cd15006">
    <property type="entry name" value="7tmA_GPR176"/>
    <property type="match status" value="1"/>
</dbReference>
<dbReference type="FunFam" id="1.20.1070.10:FF:000220">
    <property type="entry name" value="Probable G-protein coupled receptor 176"/>
    <property type="match status" value="1"/>
</dbReference>
<dbReference type="Gene3D" id="1.20.1070.10">
    <property type="entry name" value="Rhodopsin 7-helix transmembrane proteins"/>
    <property type="match status" value="1"/>
</dbReference>
<dbReference type="InterPro" id="IPR043523">
    <property type="entry name" value="GPCR_176_Rhodpsn_7TM"/>
</dbReference>
<dbReference type="InterPro" id="IPR000276">
    <property type="entry name" value="GPCR_Rhodpsn"/>
</dbReference>
<dbReference type="InterPro" id="IPR017452">
    <property type="entry name" value="GPCR_Rhodpsn_7TM"/>
</dbReference>
<dbReference type="PANTHER" id="PTHR22752">
    <property type="entry name" value="G PROTEIN-COUPLED RECEPTOR"/>
    <property type="match status" value="1"/>
</dbReference>
<dbReference type="PANTHER" id="PTHR22752:SF1">
    <property type="entry name" value="G-PROTEIN COUPLED RECEPTOR 176"/>
    <property type="match status" value="1"/>
</dbReference>
<dbReference type="Pfam" id="PF00001">
    <property type="entry name" value="7tm_1"/>
    <property type="match status" value="1"/>
</dbReference>
<dbReference type="PRINTS" id="PR00237">
    <property type="entry name" value="GPCRRHODOPSN"/>
</dbReference>
<dbReference type="SUPFAM" id="SSF81321">
    <property type="entry name" value="Family A G protein-coupled receptor-like"/>
    <property type="match status" value="1"/>
</dbReference>
<dbReference type="PROSITE" id="PS50262">
    <property type="entry name" value="G_PROTEIN_RECEP_F1_2"/>
    <property type="match status" value="1"/>
</dbReference>
<protein>
    <recommendedName>
        <fullName>Probable G-protein coupled receptor 176</fullName>
    </recommendedName>
    <alternativeName>
        <fullName>G-protein coupled receptor AGR9</fullName>
    </alternativeName>
    <alternativeName>
        <fullName>RBU-15</fullName>
    </alternativeName>
</protein>
<keyword id="KW-0090">Biological rhythms</keyword>
<keyword id="KW-1003">Cell membrane</keyword>
<keyword id="KW-0297">G-protein coupled receptor</keyword>
<keyword id="KW-0325">Glycoprotein</keyword>
<keyword id="KW-0472">Membrane</keyword>
<keyword id="KW-0675">Receptor</keyword>
<keyword id="KW-1185">Reference proteome</keyword>
<keyword id="KW-0807">Transducer</keyword>
<keyword id="KW-0812">Transmembrane</keyword>
<keyword id="KW-1133">Transmembrane helix</keyword>
<evidence type="ECO:0000250" key="1">
    <source>
        <dbReference type="UniProtKB" id="Q80WT4"/>
    </source>
</evidence>
<evidence type="ECO:0000255" key="2"/>
<evidence type="ECO:0000255" key="3">
    <source>
        <dbReference type="PROSITE-ProRule" id="PRU00521"/>
    </source>
</evidence>
<evidence type="ECO:0000256" key="4">
    <source>
        <dbReference type="SAM" id="MobiDB-lite"/>
    </source>
</evidence>
<evidence type="ECO:0000269" key="5">
    <source>
    </source>
</evidence>
<evidence type="ECO:0000305" key="6"/>
<reference key="1">
    <citation type="journal article" date="1994" name="Biochim. Biophys. Acta">
        <title>Molecular cloning of a novel putative G protein-coupled receptor from rat aortic smooth muscle. Downregulation of the mRNA level by the cyclic AMP messenger pathway.</title>
        <authorList>
            <person name="Ishizaka N."/>
            <person name="Okazaki H."/>
            <person name="Kurokawa K."/>
            <person name="Kumada M."/>
            <person name="Takuwa Y."/>
        </authorList>
    </citation>
    <scope>NUCLEOTIDE SEQUENCE [MRNA]</scope>
    <scope>TISSUE SPECIFICITY</scope>
    <source>
        <tissue>Aortic smooth muscle</tissue>
    </source>
</reference>
<reference key="2">
    <citation type="journal article" date="1995" name="Biochim. Biophys. Acta">
        <title>cDNA cloning of a putative G protein-coupled receptor from brain.</title>
        <authorList>
            <person name="Hata S."/>
            <person name="Emi Y."/>
            <person name="Iyanagi T."/>
            <person name="Osumi T."/>
        </authorList>
    </citation>
    <scope>NUCLEOTIDE SEQUENCE [MRNA] OF 67-506</scope>
    <source>
        <strain>Sprague-Dawley</strain>
        <tissue>Brain</tissue>
    </source>
</reference>
<organism>
    <name type="scientific">Rattus norvegicus</name>
    <name type="common">Rat</name>
    <dbReference type="NCBI Taxonomy" id="10116"/>
    <lineage>
        <taxon>Eukaryota</taxon>
        <taxon>Metazoa</taxon>
        <taxon>Chordata</taxon>
        <taxon>Craniata</taxon>
        <taxon>Vertebrata</taxon>
        <taxon>Euteleostomi</taxon>
        <taxon>Mammalia</taxon>
        <taxon>Eutheria</taxon>
        <taxon>Euarchontoglires</taxon>
        <taxon>Glires</taxon>
        <taxon>Rodentia</taxon>
        <taxon>Myomorpha</taxon>
        <taxon>Muroidea</taxon>
        <taxon>Muridae</taxon>
        <taxon>Murinae</taxon>
        <taxon>Rattus</taxon>
    </lineage>
</organism>
<gene>
    <name type="primary">Gpr176</name>
    <name type="synonym">Agr9</name>
    <name type="synonym">Gm1012</name>
</gene>
<feature type="chain" id="PRO_0000069658" description="Probable G-protein coupled receptor 176">
    <location>
        <begin position="1"/>
        <end position="513"/>
    </location>
</feature>
<feature type="topological domain" description="Extracellular" evidence="6">
    <location>
        <begin position="1"/>
        <end position="41"/>
    </location>
</feature>
<feature type="transmembrane region" description="Helical; Name=1" evidence="2">
    <location>
        <begin position="42"/>
        <end position="64"/>
    </location>
</feature>
<feature type="topological domain" description="Cytoplasmic" evidence="6">
    <location>
        <begin position="65"/>
        <end position="77"/>
    </location>
</feature>
<feature type="transmembrane region" description="Helical; Name=2" evidence="2">
    <location>
        <begin position="78"/>
        <end position="98"/>
    </location>
</feature>
<feature type="topological domain" description="Extracellular" evidence="6">
    <location>
        <begin position="99"/>
        <end position="108"/>
    </location>
</feature>
<feature type="transmembrane region" description="Helical; Name=3" evidence="2">
    <location>
        <begin position="109"/>
        <end position="129"/>
    </location>
</feature>
<feature type="topological domain" description="Cytoplasmic" evidence="6">
    <location>
        <begin position="130"/>
        <end position="157"/>
    </location>
</feature>
<feature type="transmembrane region" description="Helical; Name=4" evidence="2">
    <location>
        <begin position="158"/>
        <end position="177"/>
    </location>
</feature>
<feature type="topological domain" description="Extracellular" evidence="6">
    <location>
        <begin position="178"/>
        <end position="204"/>
    </location>
</feature>
<feature type="transmembrane region" description="Helical; Name=5" evidence="2">
    <location>
        <begin position="205"/>
        <end position="225"/>
    </location>
</feature>
<feature type="topological domain" description="Cytoplasmic" evidence="6">
    <location>
        <begin position="226"/>
        <end position="264"/>
    </location>
</feature>
<feature type="transmembrane region" description="Helical; Name=6" evidence="2">
    <location>
        <begin position="265"/>
        <end position="285"/>
    </location>
</feature>
<feature type="topological domain" description="Extracellular" evidence="6">
    <location>
        <begin position="286"/>
        <end position="301"/>
    </location>
</feature>
<feature type="transmembrane region" description="Helical; Name=7" evidence="2">
    <location>
        <begin position="302"/>
        <end position="322"/>
    </location>
</feature>
<feature type="topological domain" description="Cytoplasmic" evidence="6">
    <location>
        <begin position="323"/>
        <end position="513"/>
    </location>
</feature>
<feature type="region of interest" description="Disordered" evidence="4">
    <location>
        <begin position="1"/>
        <end position="25"/>
    </location>
</feature>
<feature type="region of interest" description="Disordered" evidence="4">
    <location>
        <begin position="404"/>
        <end position="432"/>
    </location>
</feature>
<feature type="glycosylation site" description="N-linked (GlcNAc...) asparagine" evidence="2">
    <location>
        <position position="4"/>
    </location>
</feature>
<feature type="glycosylation site" description="N-linked (GlcNAc...) asparagine" evidence="2">
    <location>
        <position position="11"/>
    </location>
</feature>
<feature type="glycosylation site" description="N-linked (GlcNAc...) asparagine" evidence="2">
    <location>
        <position position="17"/>
    </location>
</feature>
<feature type="glycosylation site" description="N-linked (GlcNAc...) asparagine" evidence="2">
    <location>
        <position position="26"/>
    </location>
</feature>
<feature type="sequence conflict" description="In Ref. 1; AAB31153." evidence="6" ref="1">
    <original>V</original>
    <variation>I</variation>
    <location>
        <position position="210"/>
    </location>
</feature>
<name>GP176_RAT</name>
<sequence>MGHNGSWVSPNTSHPRNTSGAQAGANSSAFGELSEAQLYRQFTTTVQVVIFIGSLLGNFTVLWSTCRTTVFKSVTNRFIKNLACSGICASVVCVPFDIILSTSPHCCWWIYTMLFCKVLKFLHKVFCSVTVLSFPAIALDRYYSVLYPLERKISDAKSRELVMYIWAHAVVASVPVFAVTNVADIYATSTCTEVWSNSLGHLVYVLIYNVTTVIVPVAVVFLFLILIRRALSASQKKKVIIAALRTPQNTISIPYASQREAELHATLLSMVTVFILCSVPYATLVVYQTVLNVPNTSVFLLLTAIWLPKVSLLANPVLFLTVNRSVRKCLVGTLVQLHHRYSRRNVVSTGSGVVEPSLEPSMRSGSQLLEMFHIGQQQIFKPSEDEEESEAKYLGSTDFQAKEVLTSSPEGEESQLAPSVPPPGTVDSVSRVSPVAPVEPGIFPDKYSLQFGFGPFELPPQWLSETRNSKKRLLPPLGNTPEELIQTKVPRVSRVERKMSRNNKVSIFPKVDS</sequence>